<sequence>MDELVIAGRSFSSRLMVGTGKFASNSLMADALAASGSQIVTVALRRVDIDRPEDDLLAHIDRDKYLLLPNTSGARDAEEAVRLARLARAAGCEPWVKLEVTPDPYYLLPDPIETLKAAEILVKEGFVVLPYINADPVLAKHLQEAGTATVMPLGAPIGTNKGVRTRDNIAIIIEQAIVPVVVDAGLGAPSHVAEAMEMGADAVLVNTALAVTPDPAGMAHAFRLGVEAGRRAFLAGLPAQQQKAEASSPLTGFLRDEQ</sequence>
<evidence type="ECO:0000255" key="1">
    <source>
        <dbReference type="HAMAP-Rule" id="MF_00443"/>
    </source>
</evidence>
<dbReference type="EC" id="2.8.1.10" evidence="1"/>
<dbReference type="EMBL" id="CP000142">
    <property type="protein sequence ID" value="ABA87868.1"/>
    <property type="molecule type" value="Genomic_DNA"/>
</dbReference>
<dbReference type="RefSeq" id="WP_011340309.1">
    <property type="nucleotide sequence ID" value="NC_007498.2"/>
</dbReference>
<dbReference type="SMR" id="Q3A6Y9"/>
<dbReference type="STRING" id="338963.Pcar_0609"/>
<dbReference type="KEGG" id="pca:Pcar_0609"/>
<dbReference type="eggNOG" id="COG2022">
    <property type="taxonomic scope" value="Bacteria"/>
</dbReference>
<dbReference type="HOGENOM" id="CLU_062233_1_0_7"/>
<dbReference type="OrthoDB" id="9805935at2"/>
<dbReference type="UniPathway" id="UPA00060"/>
<dbReference type="Proteomes" id="UP000002534">
    <property type="component" value="Chromosome"/>
</dbReference>
<dbReference type="GO" id="GO:0005737">
    <property type="term" value="C:cytoplasm"/>
    <property type="evidence" value="ECO:0007669"/>
    <property type="project" value="UniProtKB-SubCell"/>
</dbReference>
<dbReference type="GO" id="GO:1990107">
    <property type="term" value="F:thiazole synthase activity"/>
    <property type="evidence" value="ECO:0007669"/>
    <property type="project" value="UniProtKB-EC"/>
</dbReference>
<dbReference type="GO" id="GO:0009229">
    <property type="term" value="P:thiamine diphosphate biosynthetic process"/>
    <property type="evidence" value="ECO:0007669"/>
    <property type="project" value="UniProtKB-UniRule"/>
</dbReference>
<dbReference type="CDD" id="cd04728">
    <property type="entry name" value="ThiG"/>
    <property type="match status" value="1"/>
</dbReference>
<dbReference type="FunFam" id="3.20.20.70:FF:000049">
    <property type="entry name" value="Thiazole synthase"/>
    <property type="match status" value="1"/>
</dbReference>
<dbReference type="Gene3D" id="3.20.20.70">
    <property type="entry name" value="Aldolase class I"/>
    <property type="match status" value="1"/>
</dbReference>
<dbReference type="HAMAP" id="MF_00443">
    <property type="entry name" value="ThiG"/>
    <property type="match status" value="1"/>
</dbReference>
<dbReference type="InterPro" id="IPR013785">
    <property type="entry name" value="Aldolase_TIM"/>
</dbReference>
<dbReference type="InterPro" id="IPR033983">
    <property type="entry name" value="Thiazole_synthase_ThiG"/>
</dbReference>
<dbReference type="InterPro" id="IPR008867">
    <property type="entry name" value="ThiG"/>
</dbReference>
<dbReference type="PANTHER" id="PTHR34266">
    <property type="entry name" value="THIAZOLE SYNTHASE"/>
    <property type="match status" value="1"/>
</dbReference>
<dbReference type="PANTHER" id="PTHR34266:SF2">
    <property type="entry name" value="THIAZOLE SYNTHASE"/>
    <property type="match status" value="1"/>
</dbReference>
<dbReference type="Pfam" id="PF05690">
    <property type="entry name" value="ThiG"/>
    <property type="match status" value="1"/>
</dbReference>
<dbReference type="SUPFAM" id="SSF110399">
    <property type="entry name" value="ThiG-like"/>
    <property type="match status" value="1"/>
</dbReference>
<comment type="function">
    <text evidence="1">Catalyzes the rearrangement of 1-deoxy-D-xylulose 5-phosphate (DXP) to produce the thiazole phosphate moiety of thiamine. Sulfur is provided by the thiocarboxylate moiety of the carrier protein ThiS. In vitro, sulfur can be provided by H(2)S.</text>
</comment>
<comment type="catalytic activity">
    <reaction evidence="1">
        <text>[ThiS sulfur-carrier protein]-C-terminal-Gly-aminoethanethioate + 2-iminoacetate + 1-deoxy-D-xylulose 5-phosphate = [ThiS sulfur-carrier protein]-C-terminal Gly-Gly + 2-[(2R,5Z)-2-carboxy-4-methylthiazol-5(2H)-ylidene]ethyl phosphate + 2 H2O + H(+)</text>
        <dbReference type="Rhea" id="RHEA:26297"/>
        <dbReference type="Rhea" id="RHEA-COMP:12909"/>
        <dbReference type="Rhea" id="RHEA-COMP:19908"/>
        <dbReference type="ChEBI" id="CHEBI:15377"/>
        <dbReference type="ChEBI" id="CHEBI:15378"/>
        <dbReference type="ChEBI" id="CHEBI:57792"/>
        <dbReference type="ChEBI" id="CHEBI:62899"/>
        <dbReference type="ChEBI" id="CHEBI:77846"/>
        <dbReference type="ChEBI" id="CHEBI:90778"/>
        <dbReference type="ChEBI" id="CHEBI:232372"/>
        <dbReference type="EC" id="2.8.1.10"/>
    </reaction>
</comment>
<comment type="pathway">
    <text evidence="1">Cofactor biosynthesis; thiamine diphosphate biosynthesis.</text>
</comment>
<comment type="subunit">
    <text evidence="1">Homotetramer. Forms heterodimers with either ThiH or ThiS.</text>
</comment>
<comment type="subcellular location">
    <subcellularLocation>
        <location evidence="1">Cytoplasm</location>
    </subcellularLocation>
</comment>
<comment type="similarity">
    <text evidence="1">Belongs to the ThiG family.</text>
</comment>
<protein>
    <recommendedName>
        <fullName evidence="1">Thiazole synthase 2</fullName>
        <ecNumber evidence="1">2.8.1.10</ecNumber>
    </recommendedName>
</protein>
<reference key="1">
    <citation type="submission" date="2005-10" db="EMBL/GenBank/DDBJ databases">
        <title>Complete sequence of Pelobacter carbinolicus DSM 2380.</title>
        <authorList>
            <person name="Copeland A."/>
            <person name="Lucas S."/>
            <person name="Lapidus A."/>
            <person name="Barry K."/>
            <person name="Detter J.C."/>
            <person name="Glavina T."/>
            <person name="Hammon N."/>
            <person name="Israni S."/>
            <person name="Pitluck S."/>
            <person name="Chertkov O."/>
            <person name="Schmutz J."/>
            <person name="Larimer F."/>
            <person name="Land M."/>
            <person name="Kyrpides N."/>
            <person name="Ivanova N."/>
            <person name="Richardson P."/>
        </authorList>
    </citation>
    <scope>NUCLEOTIDE SEQUENCE [LARGE SCALE GENOMIC DNA]</scope>
    <source>
        <strain>DSM 2380 / NBRC 103641 / GraBd1</strain>
    </source>
</reference>
<gene>
    <name evidence="1" type="primary">thiG2</name>
    <name type="ordered locus">Pcar_0609</name>
</gene>
<name>THIG2_SYNC1</name>
<proteinExistence type="inferred from homology"/>
<feature type="chain" id="PRO_0000236352" description="Thiazole synthase 2">
    <location>
        <begin position="1"/>
        <end position="258"/>
    </location>
</feature>
<feature type="active site" description="Schiff-base intermediate with DXP" evidence="1">
    <location>
        <position position="97"/>
    </location>
</feature>
<feature type="binding site" evidence="1">
    <location>
        <position position="158"/>
    </location>
    <ligand>
        <name>1-deoxy-D-xylulose 5-phosphate</name>
        <dbReference type="ChEBI" id="CHEBI:57792"/>
    </ligand>
</feature>
<feature type="binding site" evidence="1">
    <location>
        <begin position="184"/>
        <end position="185"/>
    </location>
    <ligand>
        <name>1-deoxy-D-xylulose 5-phosphate</name>
        <dbReference type="ChEBI" id="CHEBI:57792"/>
    </ligand>
</feature>
<feature type="binding site" evidence="1">
    <location>
        <begin position="206"/>
        <end position="207"/>
    </location>
    <ligand>
        <name>1-deoxy-D-xylulose 5-phosphate</name>
        <dbReference type="ChEBI" id="CHEBI:57792"/>
    </ligand>
</feature>
<keyword id="KW-0963">Cytoplasm</keyword>
<keyword id="KW-1185">Reference proteome</keyword>
<keyword id="KW-0704">Schiff base</keyword>
<keyword id="KW-0784">Thiamine biosynthesis</keyword>
<keyword id="KW-0808">Transferase</keyword>
<organism>
    <name type="scientific">Syntrophotalea carbinolica (strain DSM 2380 / NBRC 103641 / GraBd1)</name>
    <name type="common">Pelobacter carbinolicus</name>
    <dbReference type="NCBI Taxonomy" id="338963"/>
    <lineage>
        <taxon>Bacteria</taxon>
        <taxon>Pseudomonadati</taxon>
        <taxon>Thermodesulfobacteriota</taxon>
        <taxon>Desulfuromonadia</taxon>
        <taxon>Desulfuromonadales</taxon>
        <taxon>Syntrophotaleaceae</taxon>
        <taxon>Syntrophotalea</taxon>
    </lineage>
</organism>
<accession>Q3A6Y9</accession>